<organism>
    <name type="scientific">Dechloromonas aromatica (strain RCB)</name>
    <dbReference type="NCBI Taxonomy" id="159087"/>
    <lineage>
        <taxon>Bacteria</taxon>
        <taxon>Pseudomonadati</taxon>
        <taxon>Pseudomonadota</taxon>
        <taxon>Betaproteobacteria</taxon>
        <taxon>Rhodocyclales</taxon>
        <taxon>Azonexaceae</taxon>
        <taxon>Dechloromonas</taxon>
    </lineage>
</organism>
<comment type="function">
    <text evidence="1">Allows the formation of correctly charged Asn-tRNA(Asn) or Gln-tRNA(Gln) through the transamidation of misacylated Asp-tRNA(Asn) or Glu-tRNA(Gln) in organisms which lack either or both of asparaginyl-tRNA or glutaminyl-tRNA synthetases. The reaction takes place in the presence of glutamine and ATP through an activated phospho-Asp-tRNA(Asn) or phospho-Glu-tRNA(Gln).</text>
</comment>
<comment type="catalytic activity">
    <reaction evidence="1">
        <text>L-glutamyl-tRNA(Gln) + L-glutamine + ATP + H2O = L-glutaminyl-tRNA(Gln) + L-glutamate + ADP + phosphate + H(+)</text>
        <dbReference type="Rhea" id="RHEA:17521"/>
        <dbReference type="Rhea" id="RHEA-COMP:9681"/>
        <dbReference type="Rhea" id="RHEA-COMP:9684"/>
        <dbReference type="ChEBI" id="CHEBI:15377"/>
        <dbReference type="ChEBI" id="CHEBI:15378"/>
        <dbReference type="ChEBI" id="CHEBI:29985"/>
        <dbReference type="ChEBI" id="CHEBI:30616"/>
        <dbReference type="ChEBI" id="CHEBI:43474"/>
        <dbReference type="ChEBI" id="CHEBI:58359"/>
        <dbReference type="ChEBI" id="CHEBI:78520"/>
        <dbReference type="ChEBI" id="CHEBI:78521"/>
        <dbReference type="ChEBI" id="CHEBI:456216"/>
    </reaction>
</comment>
<comment type="catalytic activity">
    <reaction evidence="1">
        <text>L-aspartyl-tRNA(Asn) + L-glutamine + ATP + H2O = L-asparaginyl-tRNA(Asn) + L-glutamate + ADP + phosphate + 2 H(+)</text>
        <dbReference type="Rhea" id="RHEA:14513"/>
        <dbReference type="Rhea" id="RHEA-COMP:9674"/>
        <dbReference type="Rhea" id="RHEA-COMP:9677"/>
        <dbReference type="ChEBI" id="CHEBI:15377"/>
        <dbReference type="ChEBI" id="CHEBI:15378"/>
        <dbReference type="ChEBI" id="CHEBI:29985"/>
        <dbReference type="ChEBI" id="CHEBI:30616"/>
        <dbReference type="ChEBI" id="CHEBI:43474"/>
        <dbReference type="ChEBI" id="CHEBI:58359"/>
        <dbReference type="ChEBI" id="CHEBI:78515"/>
        <dbReference type="ChEBI" id="CHEBI:78516"/>
        <dbReference type="ChEBI" id="CHEBI:456216"/>
    </reaction>
</comment>
<comment type="subunit">
    <text evidence="1">Heterotrimer of A, B and C subunits.</text>
</comment>
<comment type="similarity">
    <text evidence="1">Belongs to the GatB/GatE family. GatB subfamily.</text>
</comment>
<evidence type="ECO:0000255" key="1">
    <source>
        <dbReference type="HAMAP-Rule" id="MF_00121"/>
    </source>
</evidence>
<protein>
    <recommendedName>
        <fullName evidence="1">Aspartyl/glutamyl-tRNA(Asn/Gln) amidotransferase subunit B</fullName>
        <shortName evidence="1">Asp/Glu-ADT subunit B</shortName>
        <ecNumber evidence="1">6.3.5.-</ecNumber>
    </recommendedName>
</protein>
<reference key="1">
    <citation type="journal article" date="2009" name="BMC Genomics">
        <title>Metabolic analysis of the soil microbe Dechloromonas aromatica str. RCB: indications of a surprisingly complex life-style and cryptic anaerobic pathways for aromatic degradation.</title>
        <authorList>
            <person name="Salinero K.K."/>
            <person name="Keller K."/>
            <person name="Feil W.S."/>
            <person name="Feil H."/>
            <person name="Trong S."/>
            <person name="Di Bartolo G."/>
            <person name="Lapidus A."/>
        </authorList>
    </citation>
    <scope>NUCLEOTIDE SEQUENCE [LARGE SCALE GENOMIC DNA]</scope>
    <source>
        <strain>RCB</strain>
    </source>
</reference>
<proteinExistence type="inferred from homology"/>
<keyword id="KW-0067">ATP-binding</keyword>
<keyword id="KW-0436">Ligase</keyword>
<keyword id="KW-0547">Nucleotide-binding</keyword>
<keyword id="KW-0648">Protein biosynthesis</keyword>
<accession>Q47JV2</accession>
<feature type="chain" id="PRO_0000241213" description="Aspartyl/glutamyl-tRNA(Asn/Gln) amidotransferase subunit B">
    <location>
        <begin position="1"/>
        <end position="484"/>
    </location>
</feature>
<name>GATB_DECAR</name>
<sequence length="484" mass="52662">MTQWEVVIGIETHAQLSTVSKIFSGASTAFGAEPNTQACAVDLALPGVLPVLNKKAVECAIRFGLAIGAEVAQKSVFARKNYFYPDLPKGYQISQMDLPVVVGGNITLQVGQGDKAYEKIVRLTRAHLEEDAGKSLHEDFHGKSGIDLNRAGTPLLEIVSEPDMRSSDEAVAYARALHALVRWIGICDGNMQEGSFRCDANVSVRPKGQAEFGTRREIKNLNSFRFMKEAIDFEVQWQINEIEEGRKIQQATVLFDPDTGETRMMRSKEDAHDYRYFPDPDLLPLMIPAEWIARVQGEMPELPVQRRERFAGDLGLSAYDASALTASQEIADYFEAVVAIAGKANAKPCANWVMVDLAARLNKDGKDIADSPVSAAQLAGLIQRIADSTISNNIAKKVFEALWNGEGATADEVIDKQGLKQITDTGAIEALVDEVLAANAANVAEFKAGKEKAFNALVGQVMKAAKGKANPQQVNDLLKQKLAG</sequence>
<dbReference type="EC" id="6.3.5.-" evidence="1"/>
<dbReference type="EMBL" id="CP000089">
    <property type="protein sequence ID" value="AAZ44879.1"/>
    <property type="molecule type" value="Genomic_DNA"/>
</dbReference>
<dbReference type="SMR" id="Q47JV2"/>
<dbReference type="STRING" id="159087.Daro_0120"/>
<dbReference type="KEGG" id="dar:Daro_0120"/>
<dbReference type="eggNOG" id="COG0064">
    <property type="taxonomic scope" value="Bacteria"/>
</dbReference>
<dbReference type="HOGENOM" id="CLU_019240_0_0_4"/>
<dbReference type="OrthoDB" id="9804078at2"/>
<dbReference type="GO" id="GO:0050566">
    <property type="term" value="F:asparaginyl-tRNA synthase (glutamine-hydrolyzing) activity"/>
    <property type="evidence" value="ECO:0007669"/>
    <property type="project" value="RHEA"/>
</dbReference>
<dbReference type="GO" id="GO:0005524">
    <property type="term" value="F:ATP binding"/>
    <property type="evidence" value="ECO:0007669"/>
    <property type="project" value="UniProtKB-KW"/>
</dbReference>
<dbReference type="GO" id="GO:0050567">
    <property type="term" value="F:glutaminyl-tRNA synthase (glutamine-hydrolyzing) activity"/>
    <property type="evidence" value="ECO:0007669"/>
    <property type="project" value="UniProtKB-UniRule"/>
</dbReference>
<dbReference type="GO" id="GO:0070681">
    <property type="term" value="P:glutaminyl-tRNAGln biosynthesis via transamidation"/>
    <property type="evidence" value="ECO:0007669"/>
    <property type="project" value="TreeGrafter"/>
</dbReference>
<dbReference type="GO" id="GO:0006412">
    <property type="term" value="P:translation"/>
    <property type="evidence" value="ECO:0007669"/>
    <property type="project" value="UniProtKB-UniRule"/>
</dbReference>
<dbReference type="FunFam" id="1.10.10.410:FF:000001">
    <property type="entry name" value="Aspartyl/glutamyl-tRNA(Asn/Gln) amidotransferase subunit B"/>
    <property type="match status" value="1"/>
</dbReference>
<dbReference type="FunFam" id="1.10.150.380:FF:000001">
    <property type="entry name" value="Aspartyl/glutamyl-tRNA(Asn/Gln) amidotransferase subunit B"/>
    <property type="match status" value="1"/>
</dbReference>
<dbReference type="Gene3D" id="1.10.10.410">
    <property type="match status" value="1"/>
</dbReference>
<dbReference type="Gene3D" id="1.10.150.380">
    <property type="entry name" value="GatB domain, N-terminal subdomain"/>
    <property type="match status" value="1"/>
</dbReference>
<dbReference type="HAMAP" id="MF_00121">
    <property type="entry name" value="GatB"/>
    <property type="match status" value="1"/>
</dbReference>
<dbReference type="InterPro" id="IPR017959">
    <property type="entry name" value="Asn/Gln-tRNA_amidoTrfase_suB/E"/>
</dbReference>
<dbReference type="InterPro" id="IPR006075">
    <property type="entry name" value="Asn/Gln-tRNA_Trfase_suB/E_cat"/>
</dbReference>
<dbReference type="InterPro" id="IPR018027">
    <property type="entry name" value="Asn/Gln_amidotransferase"/>
</dbReference>
<dbReference type="InterPro" id="IPR003789">
    <property type="entry name" value="Asn/Gln_tRNA_amidoTrase-B-like"/>
</dbReference>
<dbReference type="InterPro" id="IPR004413">
    <property type="entry name" value="GatB"/>
</dbReference>
<dbReference type="InterPro" id="IPR042114">
    <property type="entry name" value="GatB_C_1"/>
</dbReference>
<dbReference type="InterPro" id="IPR023168">
    <property type="entry name" value="GatB_Yqey_C_2"/>
</dbReference>
<dbReference type="InterPro" id="IPR017958">
    <property type="entry name" value="Gln-tRNA_amidoTrfase_suB_CS"/>
</dbReference>
<dbReference type="InterPro" id="IPR014746">
    <property type="entry name" value="Gln_synth/guanido_kin_cat_dom"/>
</dbReference>
<dbReference type="NCBIfam" id="TIGR00133">
    <property type="entry name" value="gatB"/>
    <property type="match status" value="1"/>
</dbReference>
<dbReference type="NCBIfam" id="NF004012">
    <property type="entry name" value="PRK05477.1-2"/>
    <property type="match status" value="1"/>
</dbReference>
<dbReference type="NCBIfam" id="NF004014">
    <property type="entry name" value="PRK05477.1-4"/>
    <property type="match status" value="1"/>
</dbReference>
<dbReference type="NCBIfam" id="NF004015">
    <property type="entry name" value="PRK05477.1-5"/>
    <property type="match status" value="1"/>
</dbReference>
<dbReference type="PANTHER" id="PTHR11659">
    <property type="entry name" value="GLUTAMYL-TRNA GLN AMIDOTRANSFERASE SUBUNIT B MITOCHONDRIAL AND PROKARYOTIC PET112-RELATED"/>
    <property type="match status" value="1"/>
</dbReference>
<dbReference type="PANTHER" id="PTHR11659:SF0">
    <property type="entry name" value="GLUTAMYL-TRNA(GLN) AMIDOTRANSFERASE SUBUNIT B, MITOCHONDRIAL"/>
    <property type="match status" value="1"/>
</dbReference>
<dbReference type="Pfam" id="PF02934">
    <property type="entry name" value="GatB_N"/>
    <property type="match status" value="1"/>
</dbReference>
<dbReference type="Pfam" id="PF02637">
    <property type="entry name" value="GatB_Yqey"/>
    <property type="match status" value="1"/>
</dbReference>
<dbReference type="SMART" id="SM00845">
    <property type="entry name" value="GatB_Yqey"/>
    <property type="match status" value="1"/>
</dbReference>
<dbReference type="SUPFAM" id="SSF89095">
    <property type="entry name" value="GatB/YqeY motif"/>
    <property type="match status" value="1"/>
</dbReference>
<dbReference type="SUPFAM" id="SSF55931">
    <property type="entry name" value="Glutamine synthetase/guanido kinase"/>
    <property type="match status" value="1"/>
</dbReference>
<dbReference type="PROSITE" id="PS01234">
    <property type="entry name" value="GATB"/>
    <property type="match status" value="1"/>
</dbReference>
<gene>
    <name evidence="1" type="primary">gatB</name>
    <name type="ordered locus">Daro_0120</name>
</gene>